<organism>
    <name type="scientific">Escherichia coli O9:H4 (strain HS)</name>
    <dbReference type="NCBI Taxonomy" id="331112"/>
    <lineage>
        <taxon>Bacteria</taxon>
        <taxon>Pseudomonadati</taxon>
        <taxon>Pseudomonadota</taxon>
        <taxon>Gammaproteobacteria</taxon>
        <taxon>Enterobacterales</taxon>
        <taxon>Enterobacteriaceae</taxon>
        <taxon>Escherichia</taxon>
    </lineage>
</organism>
<protein>
    <recommendedName>
        <fullName evidence="1">Protein-L-isoaspartate O-methyltransferase</fullName>
        <ecNumber evidence="1">2.1.1.77</ecNumber>
    </recommendedName>
    <alternativeName>
        <fullName evidence="1">L-isoaspartyl protein carboxyl methyltransferase</fullName>
    </alternativeName>
    <alternativeName>
        <fullName evidence="1">Protein L-isoaspartyl methyltransferase</fullName>
    </alternativeName>
    <alternativeName>
        <fullName evidence="1">Protein-beta-aspartate methyltransferase</fullName>
        <shortName evidence="1">PIMT</shortName>
    </alternativeName>
</protein>
<name>PIMT_ECOHS</name>
<proteinExistence type="inferred from homology"/>
<dbReference type="EC" id="2.1.1.77" evidence="1"/>
<dbReference type="EMBL" id="CP000802">
    <property type="protein sequence ID" value="ABV07126.1"/>
    <property type="molecule type" value="Genomic_DNA"/>
</dbReference>
<dbReference type="RefSeq" id="WP_000254708.1">
    <property type="nucleotide sequence ID" value="NC_009800.1"/>
</dbReference>
<dbReference type="SMR" id="A8A3M2"/>
<dbReference type="GeneID" id="93779263"/>
<dbReference type="KEGG" id="ecx:EcHS_A2881"/>
<dbReference type="HOGENOM" id="CLU_055432_2_0_6"/>
<dbReference type="GO" id="GO:0005737">
    <property type="term" value="C:cytoplasm"/>
    <property type="evidence" value="ECO:0007669"/>
    <property type="project" value="UniProtKB-SubCell"/>
</dbReference>
<dbReference type="GO" id="GO:0004719">
    <property type="term" value="F:protein-L-isoaspartate (D-aspartate) O-methyltransferase activity"/>
    <property type="evidence" value="ECO:0007669"/>
    <property type="project" value="UniProtKB-UniRule"/>
</dbReference>
<dbReference type="GO" id="GO:0032259">
    <property type="term" value="P:methylation"/>
    <property type="evidence" value="ECO:0007669"/>
    <property type="project" value="UniProtKB-KW"/>
</dbReference>
<dbReference type="GO" id="GO:0036211">
    <property type="term" value="P:protein modification process"/>
    <property type="evidence" value="ECO:0007669"/>
    <property type="project" value="UniProtKB-UniRule"/>
</dbReference>
<dbReference type="GO" id="GO:0030091">
    <property type="term" value="P:protein repair"/>
    <property type="evidence" value="ECO:0007669"/>
    <property type="project" value="UniProtKB-UniRule"/>
</dbReference>
<dbReference type="CDD" id="cd02440">
    <property type="entry name" value="AdoMet_MTases"/>
    <property type="match status" value="1"/>
</dbReference>
<dbReference type="FunFam" id="3.40.50.150:FF:000010">
    <property type="entry name" value="Protein-L-isoaspartate O-methyltransferase"/>
    <property type="match status" value="1"/>
</dbReference>
<dbReference type="Gene3D" id="3.40.50.150">
    <property type="entry name" value="Vaccinia Virus protein VP39"/>
    <property type="match status" value="1"/>
</dbReference>
<dbReference type="HAMAP" id="MF_00090">
    <property type="entry name" value="PIMT"/>
    <property type="match status" value="1"/>
</dbReference>
<dbReference type="InterPro" id="IPR000682">
    <property type="entry name" value="PCMT"/>
</dbReference>
<dbReference type="InterPro" id="IPR029063">
    <property type="entry name" value="SAM-dependent_MTases_sf"/>
</dbReference>
<dbReference type="NCBIfam" id="TIGR00080">
    <property type="entry name" value="pimt"/>
    <property type="match status" value="1"/>
</dbReference>
<dbReference type="NCBIfam" id="NF001453">
    <property type="entry name" value="PRK00312.1"/>
    <property type="match status" value="1"/>
</dbReference>
<dbReference type="PANTHER" id="PTHR11579">
    <property type="entry name" value="PROTEIN-L-ISOASPARTATE O-METHYLTRANSFERASE"/>
    <property type="match status" value="1"/>
</dbReference>
<dbReference type="PANTHER" id="PTHR11579:SF0">
    <property type="entry name" value="PROTEIN-L-ISOASPARTATE(D-ASPARTATE) O-METHYLTRANSFERASE"/>
    <property type="match status" value="1"/>
</dbReference>
<dbReference type="Pfam" id="PF01135">
    <property type="entry name" value="PCMT"/>
    <property type="match status" value="1"/>
</dbReference>
<dbReference type="SUPFAM" id="SSF53335">
    <property type="entry name" value="S-adenosyl-L-methionine-dependent methyltransferases"/>
    <property type="match status" value="1"/>
</dbReference>
<dbReference type="PROSITE" id="PS01279">
    <property type="entry name" value="PCMT"/>
    <property type="match status" value="1"/>
</dbReference>
<keyword id="KW-0963">Cytoplasm</keyword>
<keyword id="KW-0489">Methyltransferase</keyword>
<keyword id="KW-0949">S-adenosyl-L-methionine</keyword>
<keyword id="KW-0808">Transferase</keyword>
<evidence type="ECO:0000255" key="1">
    <source>
        <dbReference type="HAMAP-Rule" id="MF_00090"/>
    </source>
</evidence>
<feature type="chain" id="PRO_1000057599" description="Protein-L-isoaspartate O-methyltransferase">
    <location>
        <begin position="1"/>
        <end position="208"/>
    </location>
</feature>
<feature type="active site" evidence="1">
    <location>
        <position position="59"/>
    </location>
</feature>
<comment type="function">
    <text evidence="1">Catalyzes the methyl esterification of L-isoaspartyl residues in peptides and proteins that result from spontaneous decomposition of normal L-aspartyl and L-asparaginyl residues. It plays a role in the repair and/or degradation of damaged proteins.</text>
</comment>
<comment type="catalytic activity">
    <reaction evidence="1">
        <text>[protein]-L-isoaspartate + S-adenosyl-L-methionine = [protein]-L-isoaspartate alpha-methyl ester + S-adenosyl-L-homocysteine</text>
        <dbReference type="Rhea" id="RHEA:12705"/>
        <dbReference type="Rhea" id="RHEA-COMP:12143"/>
        <dbReference type="Rhea" id="RHEA-COMP:12144"/>
        <dbReference type="ChEBI" id="CHEBI:57856"/>
        <dbReference type="ChEBI" id="CHEBI:59789"/>
        <dbReference type="ChEBI" id="CHEBI:90596"/>
        <dbReference type="ChEBI" id="CHEBI:90598"/>
        <dbReference type="EC" id="2.1.1.77"/>
    </reaction>
</comment>
<comment type="subcellular location">
    <subcellularLocation>
        <location evidence="1">Cytoplasm</location>
    </subcellularLocation>
</comment>
<comment type="similarity">
    <text evidence="1">Belongs to the methyltransferase superfamily. L-isoaspartyl/D-aspartyl protein methyltransferase family.</text>
</comment>
<reference key="1">
    <citation type="journal article" date="2008" name="J. Bacteriol.">
        <title>The pangenome structure of Escherichia coli: comparative genomic analysis of E. coli commensal and pathogenic isolates.</title>
        <authorList>
            <person name="Rasko D.A."/>
            <person name="Rosovitz M.J."/>
            <person name="Myers G.S.A."/>
            <person name="Mongodin E.F."/>
            <person name="Fricke W.F."/>
            <person name="Gajer P."/>
            <person name="Crabtree J."/>
            <person name="Sebaihia M."/>
            <person name="Thomson N.R."/>
            <person name="Chaudhuri R."/>
            <person name="Henderson I.R."/>
            <person name="Sperandio V."/>
            <person name="Ravel J."/>
        </authorList>
    </citation>
    <scope>NUCLEOTIDE SEQUENCE [LARGE SCALE GENOMIC DNA]</scope>
    <source>
        <strain>HS</strain>
    </source>
</reference>
<gene>
    <name evidence="1" type="primary">pcm</name>
    <name type="ordered locus">EcHS_A2881</name>
</gene>
<sequence length="208" mass="23258">MVSRRVQALLDQLRAQGIQDEQVLNALAAVPREKFVDEAFEQKAWDNIALPIGQGQTISQPYMVARMTELLELTPQSRVLEIGTGSGYQTAILAHLVQHVCSVERIKGLQWQARRRLKNLDLHNVSTRHGDGWQGWQARAPFDAIIVTAAPPEIPTALMTQLDEGGILVLPVGEEHQYLKRVRRRGGEFIIDTVEAVRFVPLVKGELA</sequence>
<accession>A8A3M2</accession>